<accession>Q57DN0</accession>
<organism>
    <name type="scientific">Brucella abortus biovar 1 (strain 9-941)</name>
    <dbReference type="NCBI Taxonomy" id="262698"/>
    <lineage>
        <taxon>Bacteria</taxon>
        <taxon>Pseudomonadati</taxon>
        <taxon>Pseudomonadota</taxon>
        <taxon>Alphaproteobacteria</taxon>
        <taxon>Hyphomicrobiales</taxon>
        <taxon>Brucellaceae</taxon>
        <taxon>Brucella/Ochrobactrum group</taxon>
        <taxon>Brucella</taxon>
    </lineage>
</organism>
<proteinExistence type="inferred from homology"/>
<reference key="1">
    <citation type="journal article" date="2005" name="J. Bacteriol.">
        <title>Completion of the genome sequence of Brucella abortus and comparison to the highly similar genomes of Brucella melitensis and Brucella suis.</title>
        <authorList>
            <person name="Halling S.M."/>
            <person name="Peterson-Burch B.D."/>
            <person name="Bricker B.J."/>
            <person name="Zuerner R.L."/>
            <person name="Qing Z."/>
            <person name="Li L.-L."/>
            <person name="Kapur V."/>
            <person name="Alt D.P."/>
            <person name="Olsen S.C."/>
        </authorList>
    </citation>
    <scope>NUCLEOTIDE SEQUENCE [LARGE SCALE GENOMIC DNA]</scope>
    <source>
        <strain>9-941</strain>
    </source>
</reference>
<keyword id="KW-0030">Aminoacyl-tRNA synthetase</keyword>
<keyword id="KW-0067">ATP-binding</keyword>
<keyword id="KW-0963">Cytoplasm</keyword>
<keyword id="KW-0436">Ligase</keyword>
<keyword id="KW-0547">Nucleotide-binding</keyword>
<keyword id="KW-0648">Protein biosynthesis</keyword>
<dbReference type="EC" id="6.1.1.19" evidence="1"/>
<dbReference type="EMBL" id="AE017223">
    <property type="protein sequence ID" value="AAX74254.1"/>
    <property type="molecule type" value="Genomic_DNA"/>
</dbReference>
<dbReference type="RefSeq" id="WP_002964007.1">
    <property type="nucleotide sequence ID" value="NC_006932.1"/>
</dbReference>
<dbReference type="SMR" id="Q57DN0"/>
<dbReference type="EnsemblBacteria" id="AAX74254">
    <property type="protein sequence ID" value="AAX74254"/>
    <property type="gene ID" value="BruAb1_0889"/>
</dbReference>
<dbReference type="GeneID" id="93016745"/>
<dbReference type="KEGG" id="bmb:BruAb1_0889"/>
<dbReference type="HOGENOM" id="CLU_006406_0_1_5"/>
<dbReference type="Proteomes" id="UP000000540">
    <property type="component" value="Chromosome I"/>
</dbReference>
<dbReference type="GO" id="GO:0005737">
    <property type="term" value="C:cytoplasm"/>
    <property type="evidence" value="ECO:0007669"/>
    <property type="project" value="UniProtKB-SubCell"/>
</dbReference>
<dbReference type="GO" id="GO:0004814">
    <property type="term" value="F:arginine-tRNA ligase activity"/>
    <property type="evidence" value="ECO:0007669"/>
    <property type="project" value="UniProtKB-UniRule"/>
</dbReference>
<dbReference type="GO" id="GO:0005524">
    <property type="term" value="F:ATP binding"/>
    <property type="evidence" value="ECO:0007669"/>
    <property type="project" value="UniProtKB-UniRule"/>
</dbReference>
<dbReference type="GO" id="GO:0006420">
    <property type="term" value="P:arginyl-tRNA aminoacylation"/>
    <property type="evidence" value="ECO:0007669"/>
    <property type="project" value="UniProtKB-UniRule"/>
</dbReference>
<dbReference type="CDD" id="cd00671">
    <property type="entry name" value="ArgRS_core"/>
    <property type="match status" value="1"/>
</dbReference>
<dbReference type="Gene3D" id="3.30.1360.70">
    <property type="entry name" value="Arginyl tRNA synthetase N-terminal domain"/>
    <property type="match status" value="1"/>
</dbReference>
<dbReference type="Gene3D" id="3.40.50.620">
    <property type="entry name" value="HUPs"/>
    <property type="match status" value="1"/>
</dbReference>
<dbReference type="Gene3D" id="1.10.730.10">
    <property type="entry name" value="Isoleucyl-tRNA Synthetase, Domain 1"/>
    <property type="match status" value="1"/>
</dbReference>
<dbReference type="HAMAP" id="MF_00123">
    <property type="entry name" value="Arg_tRNA_synth"/>
    <property type="match status" value="1"/>
</dbReference>
<dbReference type="InterPro" id="IPR001412">
    <property type="entry name" value="aa-tRNA-synth_I_CS"/>
</dbReference>
<dbReference type="InterPro" id="IPR001278">
    <property type="entry name" value="Arg-tRNA-ligase"/>
</dbReference>
<dbReference type="InterPro" id="IPR005148">
    <property type="entry name" value="Arg-tRNA-synth_N"/>
</dbReference>
<dbReference type="InterPro" id="IPR036695">
    <property type="entry name" value="Arg-tRNA-synth_N_sf"/>
</dbReference>
<dbReference type="InterPro" id="IPR035684">
    <property type="entry name" value="ArgRS_core"/>
</dbReference>
<dbReference type="InterPro" id="IPR008909">
    <property type="entry name" value="DALR_anticod-bd"/>
</dbReference>
<dbReference type="InterPro" id="IPR014729">
    <property type="entry name" value="Rossmann-like_a/b/a_fold"/>
</dbReference>
<dbReference type="InterPro" id="IPR009080">
    <property type="entry name" value="tRNAsynth_Ia_anticodon-bd"/>
</dbReference>
<dbReference type="NCBIfam" id="TIGR00456">
    <property type="entry name" value="argS"/>
    <property type="match status" value="1"/>
</dbReference>
<dbReference type="PANTHER" id="PTHR11956:SF5">
    <property type="entry name" value="ARGININE--TRNA LIGASE, CYTOPLASMIC"/>
    <property type="match status" value="1"/>
</dbReference>
<dbReference type="PANTHER" id="PTHR11956">
    <property type="entry name" value="ARGINYL-TRNA SYNTHETASE"/>
    <property type="match status" value="1"/>
</dbReference>
<dbReference type="Pfam" id="PF03485">
    <property type="entry name" value="Arg_tRNA_synt_N"/>
    <property type="match status" value="1"/>
</dbReference>
<dbReference type="Pfam" id="PF05746">
    <property type="entry name" value="DALR_1"/>
    <property type="match status" value="1"/>
</dbReference>
<dbReference type="Pfam" id="PF00750">
    <property type="entry name" value="tRNA-synt_1d"/>
    <property type="match status" value="1"/>
</dbReference>
<dbReference type="PRINTS" id="PR01038">
    <property type="entry name" value="TRNASYNTHARG"/>
</dbReference>
<dbReference type="SMART" id="SM01016">
    <property type="entry name" value="Arg_tRNA_synt_N"/>
    <property type="match status" value="1"/>
</dbReference>
<dbReference type="SMART" id="SM00836">
    <property type="entry name" value="DALR_1"/>
    <property type="match status" value="1"/>
</dbReference>
<dbReference type="SUPFAM" id="SSF47323">
    <property type="entry name" value="Anticodon-binding domain of a subclass of class I aminoacyl-tRNA synthetases"/>
    <property type="match status" value="1"/>
</dbReference>
<dbReference type="SUPFAM" id="SSF55190">
    <property type="entry name" value="Arginyl-tRNA synthetase (ArgRS), N-terminal 'additional' domain"/>
    <property type="match status" value="1"/>
</dbReference>
<dbReference type="SUPFAM" id="SSF52374">
    <property type="entry name" value="Nucleotidylyl transferase"/>
    <property type="match status" value="1"/>
</dbReference>
<dbReference type="PROSITE" id="PS00178">
    <property type="entry name" value="AA_TRNA_LIGASE_I"/>
    <property type="match status" value="1"/>
</dbReference>
<evidence type="ECO:0000255" key="1">
    <source>
        <dbReference type="HAMAP-Rule" id="MF_00123"/>
    </source>
</evidence>
<gene>
    <name evidence="1" type="primary">argS</name>
    <name type="ordered locus">BruAb1_0889</name>
</gene>
<name>SYR_BRUAB</name>
<sequence>MNIFADFDARIKKTFQDIDLKPKDGGELDLSRIGVEPPRDASHGDIATNAAMVLSKAVGQNPRELAARIAEALKADEDVESVDVAGPGFINLRLKASYWQRELLVMLNEGTDFGRSRLGAGKKVNVEYVSANPTGPMHVGHCRGAVVGDVLANLLKFAGYDVVKEYYINDAGAQIDVLARSVMLRYREALGESIGEIPAGLYPGDYLVRVGQELAGEFGTKLLEMPEAEALAIVKDRTIDAMMAMIRADLDALNVHHDVFYSERKLHVDHARAIRNAINDLTLKGHVYKGKLPPPKGRLPEDWEDREQTLFRSTEVGDDIDRPLMKSDGSFTYFAGDVTYFKDKYDRGFNEMIYVLGADHGGYVKRLEAVARAVSDGKAKLTVLLCQLVKLFRNGEPVRMSKRAGEFITLRDVVDEVGRDPVRFMMLYRKNDAPLDFDFAKVTEQSKDNPVFYVQYASARCHSVFRQAADQLGLVDLDRVAMGSHFEKLTDESEIALVRKLAEYPRLIESAAIHQEPHRLAFYLYDLASSFHSQWNRGAENPDLRFIKVNDPDLSLARLGLVQVVSDVLTSGLTIIGADAPTEMR</sequence>
<protein>
    <recommendedName>
        <fullName evidence="1">Arginine--tRNA ligase</fullName>
        <ecNumber evidence="1">6.1.1.19</ecNumber>
    </recommendedName>
    <alternativeName>
        <fullName evidence="1">Arginyl-tRNA synthetase</fullName>
        <shortName evidence="1">ArgRS</shortName>
    </alternativeName>
</protein>
<feature type="chain" id="PRO_0000241994" description="Arginine--tRNA ligase">
    <location>
        <begin position="1"/>
        <end position="585"/>
    </location>
</feature>
<feature type="short sequence motif" description="'HIGH' region">
    <location>
        <begin position="131"/>
        <end position="141"/>
    </location>
</feature>
<comment type="catalytic activity">
    <reaction evidence="1">
        <text>tRNA(Arg) + L-arginine + ATP = L-arginyl-tRNA(Arg) + AMP + diphosphate</text>
        <dbReference type="Rhea" id="RHEA:20301"/>
        <dbReference type="Rhea" id="RHEA-COMP:9658"/>
        <dbReference type="Rhea" id="RHEA-COMP:9673"/>
        <dbReference type="ChEBI" id="CHEBI:30616"/>
        <dbReference type="ChEBI" id="CHEBI:32682"/>
        <dbReference type="ChEBI" id="CHEBI:33019"/>
        <dbReference type="ChEBI" id="CHEBI:78442"/>
        <dbReference type="ChEBI" id="CHEBI:78513"/>
        <dbReference type="ChEBI" id="CHEBI:456215"/>
        <dbReference type="EC" id="6.1.1.19"/>
    </reaction>
</comment>
<comment type="subunit">
    <text evidence="1">Monomer.</text>
</comment>
<comment type="subcellular location">
    <subcellularLocation>
        <location evidence="1">Cytoplasm</location>
    </subcellularLocation>
</comment>
<comment type="similarity">
    <text evidence="1">Belongs to the class-I aminoacyl-tRNA synthetase family.</text>
</comment>